<evidence type="ECO:0000250" key="1"/>
<evidence type="ECO:0000250" key="2">
    <source>
        <dbReference type="UniProtKB" id="P08913"/>
    </source>
</evidence>
<evidence type="ECO:0000250" key="3">
    <source>
        <dbReference type="UniProtKB" id="P22909"/>
    </source>
</evidence>
<evidence type="ECO:0000250" key="4">
    <source>
        <dbReference type="UniProtKB" id="Q01338"/>
    </source>
</evidence>
<evidence type="ECO:0000255" key="5"/>
<evidence type="ECO:0000255" key="6">
    <source>
        <dbReference type="PROSITE-ProRule" id="PRU00521"/>
    </source>
</evidence>
<evidence type="ECO:0000256" key="7">
    <source>
        <dbReference type="SAM" id="MobiDB-lite"/>
    </source>
</evidence>
<evidence type="ECO:0000305" key="8"/>
<name>ADA2A_BOVIN</name>
<reference key="1">
    <citation type="journal article" date="1997" name="Mol. Cell. Biochem.">
        <title>The bovine alpha 2D-adrenergic receptor gene: structure, expression in retina, and pharmacological characterization of the encoded receptor.</title>
        <authorList>
            <person name="Venkataraman V."/>
            <person name="Duda T."/>
            <person name="Sharma R.K."/>
        </authorList>
    </citation>
    <scope>NUCLEOTIDE SEQUENCE [GENOMIC DNA]</scope>
</reference>
<reference key="2">
    <citation type="journal article" date="2009" name="Genome Biol.">
        <title>A whole-genome assembly of the domestic cow, Bos taurus.</title>
        <authorList>
            <person name="Zimin A.V."/>
            <person name="Delcher A.L."/>
            <person name="Florea L."/>
            <person name="Kelley D.R."/>
            <person name="Schatz M.C."/>
            <person name="Puiu D."/>
            <person name="Hanrahan F."/>
            <person name="Pertea G."/>
            <person name="Van Tassell C.P."/>
            <person name="Sonstegard T.S."/>
            <person name="Marcais G."/>
            <person name="Roberts M."/>
            <person name="Subramanian P."/>
            <person name="Yorke J.A."/>
            <person name="Salzberg S.L."/>
        </authorList>
    </citation>
    <scope>NUCLEOTIDE SEQUENCE [LARGE SCALE GENOMIC DNA]</scope>
    <source>
        <strain>Hereford</strain>
    </source>
</reference>
<reference key="3">
    <citation type="journal article" date="1993" name="Life Sci.">
        <title>Molecular determinants of the alpha-2D adrenergic receptor subtype.</title>
        <authorList>
            <person name="Blaxall H.S."/>
            <person name="Heck D.A."/>
            <person name="Bylund D.B."/>
        </authorList>
    </citation>
    <scope>NUCLEOTIDE SEQUENCE [MRNA] OF 186-225</scope>
</reference>
<comment type="function">
    <text evidence="1">Alpha-2 adrenergic receptors mediate the catecholamine-induced inhibition of adenylate cyclase through the action of G proteins. Component of the ATAC complex, a complex with histone acetyltransferase activity on histones H3 and H4 (By similarity).</text>
</comment>
<comment type="subunit">
    <text evidence="1">Component of the ADA2A-containing complex (ATAC), composed of KAT14, KAT2A, TADA2L, TADA3L, ZZ3, MBIP, WDR5, YEATS2, CCDC101 and DR1.</text>
</comment>
<comment type="subcellular location">
    <subcellularLocation>
        <location>Cell membrane</location>
        <topology>Multi-pass membrane protein</topology>
    </subcellularLocation>
</comment>
<comment type="tissue specificity">
    <text>Retina, brain and olfactory lobe.</text>
</comment>
<comment type="similarity">
    <text evidence="6">Belongs to the G-protein coupled receptor 1 family. Adrenergic receptor subfamily. ADRA2A sub-subfamily.</text>
</comment>
<comment type="caution">
    <text evidence="8">It is uncertain whether Met-1 or Met-16 is the initiator.</text>
</comment>
<comment type="sequence caution" evidence="8">
    <conflict type="erroneous initiation">
        <sequence resource="EMBL-CDS" id="AAC24958"/>
    </conflict>
    <text>Truncated N-terminus.</text>
</comment>
<comment type="sequence caution" evidence="8">
    <conflict type="frameshift">
        <sequence resource="EMBL-CDS" id="AAC24958"/>
    </conflict>
</comment>
<proteinExistence type="evidence at protein level"/>
<keyword id="KW-0002">3D-structure</keyword>
<keyword id="KW-1003">Cell membrane</keyword>
<keyword id="KW-1015">Disulfide bond</keyword>
<keyword id="KW-0297">G-protein coupled receptor</keyword>
<keyword id="KW-0325">Glycoprotein</keyword>
<keyword id="KW-0449">Lipoprotein</keyword>
<keyword id="KW-0472">Membrane</keyword>
<keyword id="KW-0488">Methylation</keyword>
<keyword id="KW-0564">Palmitate</keyword>
<keyword id="KW-0597">Phosphoprotein</keyword>
<keyword id="KW-0675">Receptor</keyword>
<keyword id="KW-1185">Reference proteome</keyword>
<keyword id="KW-0807">Transducer</keyword>
<keyword id="KW-0812">Transmembrane</keyword>
<keyword id="KW-1133">Transmembrane helix</keyword>
<feature type="chain" id="PRO_0000069078" description="Alpha-2A adrenergic receptor">
    <location>
        <begin position="1"/>
        <end position="468"/>
    </location>
</feature>
<feature type="topological domain" description="Extracellular" evidence="1">
    <location>
        <begin position="1"/>
        <end position="48"/>
    </location>
</feature>
<feature type="transmembrane region" description="Helical; Name=1" evidence="1">
    <location>
        <begin position="49"/>
        <end position="74"/>
    </location>
</feature>
<feature type="topological domain" description="Cytoplasmic" evidence="1">
    <location>
        <begin position="75"/>
        <end position="85"/>
    </location>
</feature>
<feature type="transmembrane region" description="Helical; Name=2" evidence="1">
    <location>
        <begin position="86"/>
        <end position="111"/>
    </location>
</feature>
<feature type="topological domain" description="Extracellular" evidence="1">
    <location>
        <begin position="112"/>
        <end position="121"/>
    </location>
</feature>
<feature type="transmembrane region" description="Helical; Name=3" evidence="1">
    <location>
        <begin position="122"/>
        <end position="144"/>
    </location>
</feature>
<feature type="topological domain" description="Cytoplasmic" evidence="1">
    <location>
        <begin position="145"/>
        <end position="164"/>
    </location>
</feature>
<feature type="transmembrane region" description="Helical; Name=4" evidence="1">
    <location>
        <begin position="165"/>
        <end position="188"/>
    </location>
</feature>
<feature type="topological domain" description="Extracellular" evidence="1">
    <location>
        <begin position="189"/>
        <end position="207"/>
    </location>
</feature>
<feature type="transmembrane region" description="Helical; Name=5" evidence="1">
    <location>
        <begin position="208"/>
        <end position="232"/>
    </location>
</feature>
<feature type="topological domain" description="Cytoplasmic" evidence="1">
    <location>
        <begin position="233"/>
        <end position="392"/>
    </location>
</feature>
<feature type="transmembrane region" description="Helical; Name=6" evidence="1">
    <location>
        <begin position="393"/>
        <end position="417"/>
    </location>
</feature>
<feature type="topological domain" description="Extracellular" evidence="1">
    <location>
        <begin position="418"/>
        <end position="427"/>
    </location>
</feature>
<feature type="transmembrane region" description="Helical; Name=7" evidence="1">
    <location>
        <begin position="428"/>
        <end position="448"/>
    </location>
</feature>
<feature type="topological domain" description="Cytoplasmic" evidence="1">
    <location>
        <begin position="449"/>
        <end position="468"/>
    </location>
</feature>
<feature type="region of interest" description="Disordered" evidence="7">
    <location>
        <begin position="242"/>
        <end position="279"/>
    </location>
</feature>
<feature type="region of interest" description="Disordered" evidence="7">
    <location>
        <begin position="291"/>
        <end position="381"/>
    </location>
</feature>
<feature type="compositionally biased region" description="Basic and acidic residues" evidence="7">
    <location>
        <begin position="315"/>
        <end position="332"/>
    </location>
</feature>
<feature type="compositionally biased region" description="Low complexity" evidence="7">
    <location>
        <begin position="351"/>
        <end position="366"/>
    </location>
</feature>
<feature type="modified residue" description="Phosphoserine" evidence="3">
    <location>
        <position position="348"/>
    </location>
</feature>
<feature type="modified residue" description="Omega-N-methylarginine" evidence="4">
    <location>
        <position position="370"/>
    </location>
</feature>
<feature type="lipid moiety-binding region" description="S-palmitoyl cysteine" evidence="1">
    <location>
        <position position="460"/>
    </location>
</feature>
<feature type="glycosylation site" description="N-linked (GlcNAc...) asparagine" evidence="5">
    <location>
        <position position="25"/>
    </location>
</feature>
<feature type="glycosylation site" description="N-linked (GlcNAc...) asparagine" evidence="5">
    <location>
        <position position="29"/>
    </location>
</feature>
<feature type="disulfide bond" evidence="6">
    <location>
        <begin position="121"/>
        <end position="203"/>
    </location>
</feature>
<dbReference type="EMBL" id="U79030">
    <property type="protein sequence ID" value="AAC24958.1"/>
    <property type="status" value="ALT_SEQ"/>
    <property type="molecule type" value="Genomic_DNA"/>
</dbReference>
<dbReference type="EMBL" id="DAAA02059210">
    <property type="status" value="NOT_ANNOTATED_CDS"/>
    <property type="molecule type" value="Genomic_DNA"/>
</dbReference>
<dbReference type="EMBL" id="S66295">
    <property type="protein sequence ID" value="AAB28450.1"/>
    <property type="molecule type" value="mRNA"/>
</dbReference>
<dbReference type="PIR" id="I46958">
    <property type="entry name" value="I46958"/>
</dbReference>
<dbReference type="RefSeq" id="NP_776924.1">
    <property type="nucleotide sequence ID" value="NM_174499.1"/>
</dbReference>
<dbReference type="RefSeq" id="XP_015316217.1">
    <property type="nucleotide sequence ID" value="XM_015460731.1"/>
</dbReference>
<dbReference type="PDB" id="6K41">
    <property type="method" value="EM"/>
    <property type="resolution" value="2.90 A"/>
    <property type="chains" value="R=37-44"/>
</dbReference>
<dbReference type="PDBsum" id="6K41"/>
<dbReference type="BMRB" id="Q28838"/>
<dbReference type="SMR" id="Q28838"/>
<dbReference type="FunCoup" id="Q28838">
    <property type="interactions" value="728"/>
</dbReference>
<dbReference type="STRING" id="9913.ENSBTAP00000057072"/>
<dbReference type="BindingDB" id="Q28838"/>
<dbReference type="ChEMBL" id="CHEMBL4744"/>
<dbReference type="DrugCentral" id="Q28838"/>
<dbReference type="GlyCosmos" id="Q28838">
    <property type="glycosylation" value="2 sites, No reported glycans"/>
</dbReference>
<dbReference type="GlyGen" id="Q28838">
    <property type="glycosylation" value="2 sites"/>
</dbReference>
<dbReference type="Ensembl" id="ENSBTAT00000054173.4">
    <property type="protein sequence ID" value="ENSBTAP00000057072.1"/>
    <property type="gene ID" value="ENSBTAG00000039292.4"/>
</dbReference>
<dbReference type="GeneID" id="282135"/>
<dbReference type="KEGG" id="bta:282135"/>
<dbReference type="CTD" id="150"/>
<dbReference type="VEuPathDB" id="HostDB:ENSBTAG00000039292"/>
<dbReference type="VGNC" id="VGNC:106632">
    <property type="gene designation" value="ADRA2A"/>
</dbReference>
<dbReference type="GeneTree" id="ENSGT00940000161451"/>
<dbReference type="InParanoid" id="Q28838"/>
<dbReference type="OMA" id="FFTYMLM"/>
<dbReference type="OrthoDB" id="5975661at2759"/>
<dbReference type="Reactome" id="R-BTA-390696">
    <property type="pathway name" value="Adrenoceptors"/>
</dbReference>
<dbReference type="Reactome" id="R-BTA-392023">
    <property type="pathway name" value="Adrenaline signalling through Alpha-2 adrenergic receptor"/>
</dbReference>
<dbReference type="Reactome" id="R-BTA-400042">
    <property type="pathway name" value="Adrenaline,noradrenaline inhibits insulin secretion"/>
</dbReference>
<dbReference type="Reactome" id="R-BTA-418594">
    <property type="pathway name" value="G alpha (i) signalling events"/>
</dbReference>
<dbReference type="Reactome" id="R-BTA-418597">
    <property type="pathway name" value="G alpha (z) signalling events"/>
</dbReference>
<dbReference type="Reactome" id="R-BTA-5683826">
    <property type="pathway name" value="Surfactant metabolism"/>
</dbReference>
<dbReference type="PRO" id="PR:Q28838"/>
<dbReference type="Proteomes" id="UP000009136">
    <property type="component" value="Chromosome 26"/>
</dbReference>
<dbReference type="Bgee" id="ENSBTAG00000039292">
    <property type="expression patterns" value="Expressed in myometrium and 87 other cell types or tissues"/>
</dbReference>
<dbReference type="GO" id="GO:0005737">
    <property type="term" value="C:cytoplasm"/>
    <property type="evidence" value="ECO:0007669"/>
    <property type="project" value="Ensembl"/>
</dbReference>
<dbReference type="GO" id="GO:0098691">
    <property type="term" value="C:dopaminergic synapse"/>
    <property type="evidence" value="ECO:0007669"/>
    <property type="project" value="Ensembl"/>
</dbReference>
<dbReference type="GO" id="GO:0005886">
    <property type="term" value="C:plasma membrane"/>
    <property type="evidence" value="ECO:0000318"/>
    <property type="project" value="GO_Central"/>
</dbReference>
<dbReference type="GO" id="GO:0098793">
    <property type="term" value="C:presynapse"/>
    <property type="evidence" value="ECO:0007669"/>
    <property type="project" value="GOC"/>
</dbReference>
<dbReference type="GO" id="GO:0043235">
    <property type="term" value="C:receptor complex"/>
    <property type="evidence" value="ECO:0007669"/>
    <property type="project" value="Ensembl"/>
</dbReference>
<dbReference type="GO" id="GO:0031696">
    <property type="term" value="F:alpha-2C adrenergic receptor binding"/>
    <property type="evidence" value="ECO:0007669"/>
    <property type="project" value="Ensembl"/>
</dbReference>
<dbReference type="GO" id="GO:0004938">
    <property type="term" value="F:alpha2-adrenergic receptor activity"/>
    <property type="evidence" value="ECO:0000318"/>
    <property type="project" value="GO_Central"/>
</dbReference>
<dbReference type="GO" id="GO:0051379">
    <property type="term" value="F:epinephrine binding"/>
    <property type="evidence" value="ECO:0000318"/>
    <property type="project" value="GO_Central"/>
</dbReference>
<dbReference type="GO" id="GO:0032795">
    <property type="term" value="F:heterotrimeric G-protein binding"/>
    <property type="evidence" value="ECO:0007669"/>
    <property type="project" value="Ensembl"/>
</dbReference>
<dbReference type="GO" id="GO:0051380">
    <property type="term" value="F:norepinephrine binding"/>
    <property type="evidence" value="ECO:0007669"/>
    <property type="project" value="Ensembl"/>
</dbReference>
<dbReference type="GO" id="GO:0046982">
    <property type="term" value="F:protein heterodimerization activity"/>
    <property type="evidence" value="ECO:0007669"/>
    <property type="project" value="Ensembl"/>
</dbReference>
<dbReference type="GO" id="GO:0042803">
    <property type="term" value="F:protein homodimerization activity"/>
    <property type="evidence" value="ECO:0007669"/>
    <property type="project" value="Ensembl"/>
</dbReference>
<dbReference type="GO" id="GO:0019901">
    <property type="term" value="F:protein kinase binding"/>
    <property type="evidence" value="ECO:0007669"/>
    <property type="project" value="Ensembl"/>
</dbReference>
<dbReference type="GO" id="GO:0031996">
    <property type="term" value="F:thioesterase binding"/>
    <property type="evidence" value="ECO:0007669"/>
    <property type="project" value="Ensembl"/>
</dbReference>
<dbReference type="GO" id="GO:0071880">
    <property type="term" value="P:adenylate cyclase-activating adrenergic receptor signaling pathway"/>
    <property type="evidence" value="ECO:0007669"/>
    <property type="project" value="Ensembl"/>
</dbReference>
<dbReference type="GO" id="GO:0071881">
    <property type="term" value="P:adenylate cyclase-inhibiting adrenergic receptor signaling pathway"/>
    <property type="evidence" value="ECO:0007669"/>
    <property type="project" value="Ensembl"/>
</dbReference>
<dbReference type="GO" id="GO:0032870">
    <property type="term" value="P:cellular response to hormone stimulus"/>
    <property type="evidence" value="ECO:0007669"/>
    <property type="project" value="Ensembl"/>
</dbReference>
<dbReference type="GO" id="GO:0042596">
    <property type="term" value="P:fear response"/>
    <property type="evidence" value="ECO:0007669"/>
    <property type="project" value="Ensembl"/>
</dbReference>
<dbReference type="GO" id="GO:0042593">
    <property type="term" value="P:glucose homeostasis"/>
    <property type="evidence" value="ECO:0007669"/>
    <property type="project" value="Ensembl"/>
</dbReference>
<dbReference type="GO" id="GO:0061179">
    <property type="term" value="P:negative regulation of insulin secretion involved in cellular response to glucose stimulus"/>
    <property type="evidence" value="ECO:0007669"/>
    <property type="project" value="Ensembl"/>
</dbReference>
<dbReference type="GO" id="GO:0050995">
    <property type="term" value="P:negative regulation of lipid catabolic process"/>
    <property type="evidence" value="ECO:0007669"/>
    <property type="project" value="Ensembl"/>
</dbReference>
<dbReference type="GO" id="GO:0071882">
    <property type="term" value="P:phospholipase C-activating adrenergic receptor signaling pathway"/>
    <property type="evidence" value="ECO:0007669"/>
    <property type="project" value="Ensembl"/>
</dbReference>
<dbReference type="GO" id="GO:0030168">
    <property type="term" value="P:platelet activation"/>
    <property type="evidence" value="ECO:0007669"/>
    <property type="project" value="InterPro"/>
</dbReference>
<dbReference type="GO" id="GO:0030335">
    <property type="term" value="P:positive regulation of cell migration"/>
    <property type="evidence" value="ECO:0007669"/>
    <property type="project" value="Ensembl"/>
</dbReference>
<dbReference type="GO" id="GO:0001819">
    <property type="term" value="P:positive regulation of cytokine production"/>
    <property type="evidence" value="ECO:0007669"/>
    <property type="project" value="Ensembl"/>
</dbReference>
<dbReference type="GO" id="GO:0045742">
    <property type="term" value="P:positive regulation of epidermal growth factor receptor signaling pathway"/>
    <property type="evidence" value="ECO:0007669"/>
    <property type="project" value="Ensembl"/>
</dbReference>
<dbReference type="GO" id="GO:0043410">
    <property type="term" value="P:positive regulation of MAPK cascade"/>
    <property type="evidence" value="ECO:0007669"/>
    <property type="project" value="Ensembl"/>
</dbReference>
<dbReference type="GO" id="GO:0051044">
    <property type="term" value="P:positive regulation of membrane protein ectodomain proteolysis"/>
    <property type="evidence" value="ECO:0007669"/>
    <property type="project" value="Ensembl"/>
</dbReference>
<dbReference type="GO" id="GO:0051897">
    <property type="term" value="P:positive regulation of phosphatidylinositol 3-kinase/protein kinase B signal transduction"/>
    <property type="evidence" value="ECO:0007669"/>
    <property type="project" value="Ensembl"/>
</dbReference>
<dbReference type="GO" id="GO:0090303">
    <property type="term" value="P:positive regulation of wound healing"/>
    <property type="evidence" value="ECO:0007669"/>
    <property type="project" value="Ensembl"/>
</dbReference>
<dbReference type="GO" id="GO:0099171">
    <property type="term" value="P:presynaptic modulation of chemical synaptic transmission"/>
    <property type="evidence" value="ECO:0007669"/>
    <property type="project" value="Ensembl"/>
</dbReference>
<dbReference type="GO" id="GO:0006940">
    <property type="term" value="P:regulation of smooth muscle contraction"/>
    <property type="evidence" value="ECO:0007669"/>
    <property type="project" value="InterPro"/>
</dbReference>
<dbReference type="GO" id="GO:0019229">
    <property type="term" value="P:regulation of vasoconstriction"/>
    <property type="evidence" value="ECO:0007669"/>
    <property type="project" value="InterPro"/>
</dbReference>
<dbReference type="CDD" id="cd15322">
    <property type="entry name" value="7tmA_alpha2A_AR"/>
    <property type="match status" value="1"/>
</dbReference>
<dbReference type="Gene3D" id="1.20.1070.10">
    <property type="entry name" value="Rhodopsin 7-helix transmembrane proteins"/>
    <property type="match status" value="1"/>
</dbReference>
<dbReference type="InterPro" id="IPR002233">
    <property type="entry name" value="ADR_fam"/>
</dbReference>
<dbReference type="InterPro" id="IPR001946">
    <property type="entry name" value="ADRA2A_rcpt"/>
</dbReference>
<dbReference type="InterPro" id="IPR000276">
    <property type="entry name" value="GPCR_Rhodpsn"/>
</dbReference>
<dbReference type="InterPro" id="IPR017452">
    <property type="entry name" value="GPCR_Rhodpsn_7TM"/>
</dbReference>
<dbReference type="PANTHER" id="PTHR24248">
    <property type="entry name" value="ADRENERGIC RECEPTOR-RELATED G-PROTEIN COUPLED RECEPTOR"/>
    <property type="match status" value="1"/>
</dbReference>
<dbReference type="PANTHER" id="PTHR24248:SF24">
    <property type="entry name" value="ALPHA-2A ADRENERGIC RECEPTOR"/>
    <property type="match status" value="1"/>
</dbReference>
<dbReference type="Pfam" id="PF00001">
    <property type="entry name" value="7tm_1"/>
    <property type="match status" value="1"/>
</dbReference>
<dbReference type="PRINTS" id="PR01103">
    <property type="entry name" value="ADRENERGICR"/>
</dbReference>
<dbReference type="PRINTS" id="PR00558">
    <property type="entry name" value="ADRENRGCA2AR"/>
</dbReference>
<dbReference type="PRINTS" id="PR00237">
    <property type="entry name" value="GPCRRHODOPSN"/>
</dbReference>
<dbReference type="SMART" id="SM01381">
    <property type="entry name" value="7TM_GPCR_Srsx"/>
    <property type="match status" value="1"/>
</dbReference>
<dbReference type="SUPFAM" id="SSF81321">
    <property type="entry name" value="Family A G protein-coupled receptor-like"/>
    <property type="match status" value="1"/>
</dbReference>
<dbReference type="PROSITE" id="PS00237">
    <property type="entry name" value="G_PROTEIN_RECEP_F1_1"/>
    <property type="match status" value="1"/>
</dbReference>
<dbReference type="PROSITE" id="PS50262">
    <property type="entry name" value="G_PROTEIN_RECEP_F1_2"/>
    <property type="match status" value="1"/>
</dbReference>
<accession>Q28838</accession>
<accession>A0A3Q1LKS4</accession>
<sequence>MFRQEQPLAEGSFAPMGSLQPDAGNASWNGTEAPGGGARATPYSLQVTLTLVCLAGLLMLFTVFGNVLVIIAVFTSRALKAPQNLFLVSLASADILVATLVIPFSLANEVMGYWYFGKAWCEIYLALDVLFCTSSIVHLCAISLDRYWSITQAIEYNLKRTPRRIKAIIVTVWVISAVISFPPLISFEKKRGRSGQPSAEPRCEINDQKWYVISSSIGSFFAPCLIMILVYVRIYQIAKRRTRVPPSRRGPDATAAELPGSAERRPNGLGPERGGVGPVGAEVESLQVQLNGAPGEPAPAGPPDADALDLEESSSSEHAERPPGSRRSERGPRAKGKARASQVKPGDSLPRRGPGATGLGAPTAGPAEERSGGGAKASRWRGRQNREKRFTFVLAVVIGVFVVCWFPFFFTYTLTAIGCPVPPTLFKFFFWFGYCNSSLNPVIYTIFNHDFRRAFKKILCRGDRKRIV</sequence>
<gene>
    <name evidence="2" type="primary">ADRA2A</name>
</gene>
<protein>
    <recommendedName>
        <fullName evidence="2">Alpha-2A adrenergic receptor</fullName>
    </recommendedName>
    <alternativeName>
        <fullName>Alpha-2A adrenoreceptor</fullName>
        <shortName>Alpha-2A adrenoceptor</shortName>
        <shortName>Alpha-2AAR</shortName>
    </alternativeName>
    <alternativeName>
        <fullName>Alpha-2D adrenergic receptor</fullName>
    </alternativeName>
</protein>
<organism>
    <name type="scientific">Bos taurus</name>
    <name type="common">Bovine</name>
    <dbReference type="NCBI Taxonomy" id="9913"/>
    <lineage>
        <taxon>Eukaryota</taxon>
        <taxon>Metazoa</taxon>
        <taxon>Chordata</taxon>
        <taxon>Craniata</taxon>
        <taxon>Vertebrata</taxon>
        <taxon>Euteleostomi</taxon>
        <taxon>Mammalia</taxon>
        <taxon>Eutheria</taxon>
        <taxon>Laurasiatheria</taxon>
        <taxon>Artiodactyla</taxon>
        <taxon>Ruminantia</taxon>
        <taxon>Pecora</taxon>
        <taxon>Bovidae</taxon>
        <taxon>Bovinae</taxon>
        <taxon>Bos</taxon>
    </lineage>
</organism>